<sequence>MKDTTVPLTLISLLADGEFHSGEQLGERLGMSRAAINKHIQTLRDWGVDVFTVPGKGYSLPEPIQLLDADRIHSQLDSGNVAVLPVIDSTNQYLLDRIGELRSGDACVAEYQQAGRGRRGRKWFSPFGANLYLSMYWRLEQGPAAAIGLSLVIGIVMAEVLRKLGADKVRVKWPNDLYLLDRKLAGILVELTGKTGDAAQIVIGAGINMAMRRVEEDVINQGWITLQEAGITLDRNMLAAKLIYKLRAALELFEQEGLSPYLSRWKKLDNFIDRPVKLIIGDKEIFGISRGIDTQGALLLEQDGVIKPWMGGEISLRSAE</sequence>
<protein>
    <recommendedName>
        <fullName evidence="1">Bifunctional ligase/repressor BirA</fullName>
    </recommendedName>
    <alternativeName>
        <fullName evidence="1">Biotin operon repressor</fullName>
    </alternativeName>
    <alternativeName>
        <fullName evidence="1">Biotin--[acetyl-CoA-carboxylase] ligase</fullName>
        <ecNumber evidence="1">6.3.4.15</ecNumber>
    </alternativeName>
    <alternativeName>
        <fullName evidence="1">Biotin--protein ligase</fullName>
    </alternativeName>
    <alternativeName>
        <fullName evidence="1">Biotin-[acetyl-CoA carboxylase] synthetase</fullName>
    </alternativeName>
</protein>
<name>BIRA_SALTY</name>
<evidence type="ECO:0000255" key="1">
    <source>
        <dbReference type="HAMAP-Rule" id="MF_00978"/>
    </source>
</evidence>
<evidence type="ECO:0000255" key="2">
    <source>
        <dbReference type="PROSITE-ProRule" id="PRU01067"/>
    </source>
</evidence>
<evidence type="ECO:0000305" key="3"/>
<keyword id="KW-0067">ATP-binding</keyword>
<keyword id="KW-0092">Biotin</keyword>
<keyword id="KW-0238">DNA-binding</keyword>
<keyword id="KW-0436">Ligase</keyword>
<keyword id="KW-0547">Nucleotide-binding</keyword>
<keyword id="KW-1185">Reference proteome</keyword>
<keyword id="KW-0678">Repressor</keyword>
<keyword id="KW-0804">Transcription</keyword>
<keyword id="KW-0805">Transcription regulation</keyword>
<proteinExistence type="inferred from homology"/>
<dbReference type="EC" id="6.3.4.15" evidence="1"/>
<dbReference type="EMBL" id="AF170176">
    <property type="protein sequence ID" value="AAF33493.1"/>
    <property type="molecule type" value="Genomic_DNA"/>
</dbReference>
<dbReference type="EMBL" id="AE006468">
    <property type="protein sequence ID" value="AAL22971.1"/>
    <property type="molecule type" value="Genomic_DNA"/>
</dbReference>
<dbReference type="EMBL" id="L14816">
    <property type="status" value="NOT_ANNOTATED_CDS"/>
    <property type="molecule type" value="Genomic_DNA"/>
</dbReference>
<dbReference type="RefSeq" id="NP_463012.1">
    <property type="nucleotide sequence ID" value="NC_003197.2"/>
</dbReference>
<dbReference type="RefSeq" id="WP_000655752.1">
    <property type="nucleotide sequence ID" value="NC_003197.2"/>
</dbReference>
<dbReference type="SMR" id="P37416"/>
<dbReference type="STRING" id="99287.STM4138"/>
<dbReference type="PaxDb" id="99287-STM4138"/>
<dbReference type="GeneID" id="1255664"/>
<dbReference type="KEGG" id="stm:STM4138"/>
<dbReference type="PATRIC" id="fig|99287.12.peg.4354"/>
<dbReference type="HOGENOM" id="CLU_051096_4_0_6"/>
<dbReference type="OMA" id="AVWKHIE"/>
<dbReference type="PhylomeDB" id="P37416"/>
<dbReference type="BioCyc" id="SENT99287:STM4138-MONOMER"/>
<dbReference type="Proteomes" id="UP000001014">
    <property type="component" value="Chromosome"/>
</dbReference>
<dbReference type="GO" id="GO:0005737">
    <property type="term" value="C:cytoplasm"/>
    <property type="evidence" value="ECO:0000318"/>
    <property type="project" value="GO_Central"/>
</dbReference>
<dbReference type="GO" id="GO:0005524">
    <property type="term" value="F:ATP binding"/>
    <property type="evidence" value="ECO:0007669"/>
    <property type="project" value="UniProtKB-UniRule"/>
</dbReference>
<dbReference type="GO" id="GO:0004077">
    <property type="term" value="F:biotin--[biotin carboxyl-carrier protein] ligase activity"/>
    <property type="evidence" value="ECO:0000318"/>
    <property type="project" value="GO_Central"/>
</dbReference>
<dbReference type="GO" id="GO:0003677">
    <property type="term" value="F:DNA binding"/>
    <property type="evidence" value="ECO:0007669"/>
    <property type="project" value="UniProtKB-UniRule"/>
</dbReference>
<dbReference type="GO" id="GO:0036211">
    <property type="term" value="P:protein modification process"/>
    <property type="evidence" value="ECO:0007669"/>
    <property type="project" value="InterPro"/>
</dbReference>
<dbReference type="GO" id="GO:0006355">
    <property type="term" value="P:regulation of DNA-templated transcription"/>
    <property type="evidence" value="ECO:0007669"/>
    <property type="project" value="UniProtKB-UniRule"/>
</dbReference>
<dbReference type="CDD" id="cd16442">
    <property type="entry name" value="BPL"/>
    <property type="match status" value="1"/>
</dbReference>
<dbReference type="FunFam" id="1.10.10.10:FF:000356">
    <property type="entry name" value="Bifunctional ligase/repressor BirA"/>
    <property type="match status" value="1"/>
</dbReference>
<dbReference type="FunFam" id="2.30.30.100:FF:000030">
    <property type="entry name" value="Bifunctional ligase/repressor BirA"/>
    <property type="match status" value="1"/>
</dbReference>
<dbReference type="FunFam" id="3.30.930.10:FF:000050">
    <property type="entry name" value="Bifunctional ligase/repressor BirA"/>
    <property type="match status" value="1"/>
</dbReference>
<dbReference type="Gene3D" id="2.30.30.100">
    <property type="match status" value="1"/>
</dbReference>
<dbReference type="Gene3D" id="3.30.930.10">
    <property type="entry name" value="Bira Bifunctional Protein, Domain 2"/>
    <property type="match status" value="1"/>
</dbReference>
<dbReference type="Gene3D" id="1.10.10.10">
    <property type="entry name" value="Winged helix-like DNA-binding domain superfamily/Winged helix DNA-binding domain"/>
    <property type="match status" value="1"/>
</dbReference>
<dbReference type="HAMAP" id="MF_00978">
    <property type="entry name" value="Bifunct_BirA"/>
    <property type="match status" value="1"/>
</dbReference>
<dbReference type="InterPro" id="IPR045864">
    <property type="entry name" value="aa-tRNA-synth_II/BPL/LPL"/>
</dbReference>
<dbReference type="InterPro" id="IPR030855">
    <property type="entry name" value="Bifunct_BirA"/>
</dbReference>
<dbReference type="InterPro" id="IPR004408">
    <property type="entry name" value="Biotin_CoA_COase_ligase"/>
</dbReference>
<dbReference type="InterPro" id="IPR004409">
    <property type="entry name" value="Biotin_operon_repress_HTH"/>
</dbReference>
<dbReference type="InterPro" id="IPR003142">
    <property type="entry name" value="BPL_C"/>
</dbReference>
<dbReference type="InterPro" id="IPR004143">
    <property type="entry name" value="BPL_LPL_catalytic"/>
</dbReference>
<dbReference type="InterPro" id="IPR013196">
    <property type="entry name" value="HTH_11"/>
</dbReference>
<dbReference type="InterPro" id="IPR008988">
    <property type="entry name" value="Transcriptional_repressor_C"/>
</dbReference>
<dbReference type="InterPro" id="IPR036388">
    <property type="entry name" value="WH-like_DNA-bd_sf"/>
</dbReference>
<dbReference type="InterPro" id="IPR036390">
    <property type="entry name" value="WH_DNA-bd_sf"/>
</dbReference>
<dbReference type="NCBIfam" id="TIGR00121">
    <property type="entry name" value="birA_ligase"/>
    <property type="match status" value="1"/>
</dbReference>
<dbReference type="NCBIfam" id="TIGR00122">
    <property type="entry name" value="birA_repr_reg"/>
    <property type="match status" value="1"/>
</dbReference>
<dbReference type="NCBIfam" id="NF008847">
    <property type="entry name" value="PRK11886.1-2"/>
    <property type="match status" value="1"/>
</dbReference>
<dbReference type="NCBIfam" id="NF008849">
    <property type="entry name" value="PRK11886.1-4"/>
    <property type="match status" value="1"/>
</dbReference>
<dbReference type="PANTHER" id="PTHR12835">
    <property type="entry name" value="BIOTIN PROTEIN LIGASE"/>
    <property type="match status" value="1"/>
</dbReference>
<dbReference type="PANTHER" id="PTHR12835:SF5">
    <property type="entry name" value="BIOTIN--PROTEIN LIGASE"/>
    <property type="match status" value="1"/>
</dbReference>
<dbReference type="Pfam" id="PF02237">
    <property type="entry name" value="BPL_C"/>
    <property type="match status" value="1"/>
</dbReference>
<dbReference type="Pfam" id="PF03099">
    <property type="entry name" value="BPL_LplA_LipB"/>
    <property type="match status" value="1"/>
</dbReference>
<dbReference type="Pfam" id="PF08279">
    <property type="entry name" value="HTH_11"/>
    <property type="match status" value="1"/>
</dbReference>
<dbReference type="SUPFAM" id="SSF50037">
    <property type="entry name" value="C-terminal domain of transcriptional repressors"/>
    <property type="match status" value="1"/>
</dbReference>
<dbReference type="SUPFAM" id="SSF55681">
    <property type="entry name" value="Class II aaRS and biotin synthetases"/>
    <property type="match status" value="1"/>
</dbReference>
<dbReference type="SUPFAM" id="SSF46785">
    <property type="entry name" value="Winged helix' DNA-binding domain"/>
    <property type="match status" value="1"/>
</dbReference>
<dbReference type="PROSITE" id="PS51733">
    <property type="entry name" value="BPL_LPL_CATALYTIC"/>
    <property type="match status" value="1"/>
</dbReference>
<gene>
    <name evidence="1" type="primary">birA</name>
    <name type="ordered locus">STM4138</name>
    <name type="ORF">STMF1.2</name>
</gene>
<feature type="chain" id="PRO_0000064935" description="Bifunctional ligase/repressor BirA">
    <location>
        <begin position="1"/>
        <end position="320"/>
    </location>
</feature>
<feature type="domain" description="BPL/LPL catalytic" evidence="2">
    <location>
        <begin position="66"/>
        <end position="254"/>
    </location>
</feature>
<feature type="DNA-binding region" description="H-T-H motif" evidence="1">
    <location>
        <begin position="22"/>
        <end position="41"/>
    </location>
</feature>
<feature type="binding site" evidence="1">
    <location>
        <begin position="89"/>
        <end position="91"/>
    </location>
    <ligand>
        <name>biotin</name>
        <dbReference type="ChEBI" id="CHEBI:57586"/>
    </ligand>
</feature>
<feature type="binding site" evidence="1">
    <location>
        <position position="112"/>
    </location>
    <ligand>
        <name>biotin</name>
        <dbReference type="ChEBI" id="CHEBI:57586"/>
    </ligand>
</feature>
<feature type="binding site" evidence="1">
    <location>
        <begin position="116"/>
        <end position="118"/>
    </location>
    <ligand>
        <name>biotin</name>
        <dbReference type="ChEBI" id="CHEBI:57586"/>
    </ligand>
</feature>
<feature type="binding site" evidence="1">
    <location>
        <position position="183"/>
    </location>
    <ligand>
        <name>biotin</name>
        <dbReference type="ChEBI" id="CHEBI:57586"/>
    </ligand>
</feature>
<feature type="sequence conflict" description="In Ref. 2." evidence="3" ref="2">
    <original>EL</original>
    <variation>DV</variation>
    <location>
        <begin position="100"/>
        <end position="101"/>
    </location>
</feature>
<reference key="1">
    <citation type="journal article" date="2001" name="Nature">
        <title>Complete genome sequence of Salmonella enterica serovar Typhimurium LT2.</title>
        <authorList>
            <person name="McClelland M."/>
            <person name="Sanderson K.E."/>
            <person name="Spieth J."/>
            <person name="Clifton S.W."/>
            <person name="Latreille P."/>
            <person name="Courtney L."/>
            <person name="Porwollik S."/>
            <person name="Ali J."/>
            <person name="Dante M."/>
            <person name="Du F."/>
            <person name="Hou S."/>
            <person name="Layman D."/>
            <person name="Leonard S."/>
            <person name="Nguyen C."/>
            <person name="Scott K."/>
            <person name="Holmes A."/>
            <person name="Grewal N."/>
            <person name="Mulvaney E."/>
            <person name="Ryan E."/>
            <person name="Sun H."/>
            <person name="Florea L."/>
            <person name="Miller W."/>
            <person name="Stoneking T."/>
            <person name="Nhan M."/>
            <person name="Waterston R."/>
            <person name="Wilson R.K."/>
        </authorList>
    </citation>
    <scope>NUCLEOTIDE SEQUENCE [LARGE SCALE GENOMIC DNA]</scope>
    <source>
        <strain>LT2 / SGSC1412 / ATCC 700720</strain>
    </source>
</reference>
<reference key="2">
    <citation type="journal article" date="1994" name="Arch. Microbiol.">
        <title>Sequence divergence of the murB and rrfB genes from Escherichia coli and Salmonella typhimurium.</title>
        <authorList>
            <person name="Dombrosky P.M."/>
            <person name="Schmid M.B."/>
            <person name="Young K.D."/>
        </authorList>
    </citation>
    <scope>NUCLEOTIDE SEQUENCE [GENOMIC DNA] OF 1-135</scope>
    <source>
        <strain>LT2</strain>
    </source>
</reference>
<organism>
    <name type="scientific">Salmonella typhimurium (strain LT2 / SGSC1412 / ATCC 700720)</name>
    <dbReference type="NCBI Taxonomy" id="99287"/>
    <lineage>
        <taxon>Bacteria</taxon>
        <taxon>Pseudomonadati</taxon>
        <taxon>Pseudomonadota</taxon>
        <taxon>Gammaproteobacteria</taxon>
        <taxon>Enterobacterales</taxon>
        <taxon>Enterobacteriaceae</taxon>
        <taxon>Salmonella</taxon>
    </lineage>
</organism>
<accession>P37416</accession>
<accession>Q9L9K4</accession>
<comment type="function">
    <text evidence="1">Acts both as a biotin--[acetyl-CoA-carboxylase] ligase and a biotin-operon repressor. In the presence of ATP, BirA activates biotin to form the BirA-biotinyl-5'-adenylate (BirA-bio-5'-AMP or holoBirA) complex. HoloBirA can either transfer the biotinyl moiety to the biotin carboxyl carrier protein (BCCP) subunit of acetyl-CoA carboxylase, or bind to the biotin operator site and inhibit transcription of the operon.</text>
</comment>
<comment type="catalytic activity">
    <reaction evidence="1">
        <text>biotin + L-lysyl-[protein] + ATP = N(6)-biotinyl-L-lysyl-[protein] + AMP + diphosphate + H(+)</text>
        <dbReference type="Rhea" id="RHEA:11756"/>
        <dbReference type="Rhea" id="RHEA-COMP:9752"/>
        <dbReference type="Rhea" id="RHEA-COMP:10505"/>
        <dbReference type="ChEBI" id="CHEBI:15378"/>
        <dbReference type="ChEBI" id="CHEBI:29969"/>
        <dbReference type="ChEBI" id="CHEBI:30616"/>
        <dbReference type="ChEBI" id="CHEBI:33019"/>
        <dbReference type="ChEBI" id="CHEBI:57586"/>
        <dbReference type="ChEBI" id="CHEBI:83144"/>
        <dbReference type="ChEBI" id="CHEBI:456215"/>
        <dbReference type="EC" id="6.3.4.15"/>
    </reaction>
</comment>
<comment type="similarity">
    <text evidence="1">Belongs to the biotin--protein ligase family.</text>
</comment>